<comment type="function">
    <text evidence="3 4 5 6 7">High-affinity sodium/citrate cotransporter that mediates citrate entry into cells, which is a critical participant of biochemical pathways (PubMed:14656221, PubMed:26324167, PubMed:35448538). May function in various metabolic processes in which citrate has a critical role such as energy production (Krebs cycle), fatty acid synthesis, cholesterol synthesis, glycolysis, and gluconeogenesis (PubMed:12826022). Transports citrate into the cell in a Na(+)-dependent manner, recognizing the trivalent form of citrate (physiological pH) rather than the divalent form (PubMed:12826022, PubMed:14656221, PubMed:26324167). Can recognizes succinate as a substrate, but its affinity for succinate is several fold lower than for citrate (PubMed:14656221, PubMed:26324167). The stoichiometry is probably 4 Na(+) for each carboxylate, irrespective of whether the translocated substrate is divalent or trivalent, rendering the process electrogenic (PubMed:14656221, PubMed:26324167). Involved in the regulation of citrate levels in the brain (PubMed:32682952).</text>
</comment>
<comment type="catalytic activity">
    <reaction evidence="3 4 5">
        <text>citrate(out) + 4 Na(+)(out) = citrate(in) + 4 Na(+)(in)</text>
        <dbReference type="Rhea" id="RHEA:65664"/>
        <dbReference type="ChEBI" id="CHEBI:16947"/>
        <dbReference type="ChEBI" id="CHEBI:29101"/>
    </reaction>
</comment>
<comment type="activity regulation">
    <text evidence="3">Inhibited by Li(+).</text>
</comment>
<comment type="biophysicochemical properties">
    <kinetics>
        <KM evidence="4">35.2 uM for citrate</KM>
    </kinetics>
    <phDependence>
        <text evidence="4">Optimum pH is 7.0 for citrate.</text>
    </phDependence>
</comment>
<comment type="subunit">
    <text evidence="1">Homodimer.</text>
</comment>
<comment type="subcellular location">
    <subcellularLocation>
        <location evidence="1">Cell membrane</location>
        <topology evidence="2">Multi-pass membrane protein</topology>
    </subcellularLocation>
</comment>
<comment type="disruption phenotype">
    <text evidence="6 7">Mice show increased propensity for epileptic seizures, proepileptogenic neuronal excitability changes in the hippocampus, and significant citrate level alterations in the CSF and brain tissue (PubMed:32682952). Null mice show perturbations in fatty acids, bile acids, and energy metabolites in liver, serum, and brain (PubMed:35448538).</text>
</comment>
<comment type="similarity">
    <text evidence="9">Belongs to the SLC13A/DASS transporter (TC 2.A.47) family. NADC subfamily.</text>
</comment>
<organism>
    <name type="scientific">Mus musculus</name>
    <name type="common">Mouse</name>
    <dbReference type="NCBI Taxonomy" id="10090"/>
    <lineage>
        <taxon>Eukaryota</taxon>
        <taxon>Metazoa</taxon>
        <taxon>Chordata</taxon>
        <taxon>Craniata</taxon>
        <taxon>Vertebrata</taxon>
        <taxon>Euteleostomi</taxon>
        <taxon>Mammalia</taxon>
        <taxon>Eutheria</taxon>
        <taxon>Euarchontoglires</taxon>
        <taxon>Glires</taxon>
        <taxon>Rodentia</taxon>
        <taxon>Myomorpha</taxon>
        <taxon>Muroidea</taxon>
        <taxon>Muridae</taxon>
        <taxon>Murinae</taxon>
        <taxon>Mus</taxon>
        <taxon>Mus</taxon>
    </lineage>
</organism>
<accession>Q67BT3</accession>
<gene>
    <name type="primary">Slc13a5</name>
    <name type="synonym">Nact</name>
</gene>
<proteinExistence type="evidence at protein level"/>
<feature type="chain" id="PRO_0000260102" description="Na(+)/citrate cotransporter">
    <location>
        <begin position="1"/>
        <end position="572"/>
    </location>
</feature>
<feature type="transmembrane region" description="Helical" evidence="2">
    <location>
        <begin position="13"/>
        <end position="33"/>
    </location>
</feature>
<feature type="transmembrane region" description="Helical" evidence="2">
    <location>
        <begin position="53"/>
        <end position="73"/>
    </location>
</feature>
<feature type="transmembrane region" description="Helical" evidence="2">
    <location>
        <begin position="80"/>
        <end position="100"/>
    </location>
</feature>
<feature type="transmembrane region" description="Helical" evidence="2">
    <location>
        <begin position="124"/>
        <end position="144"/>
    </location>
</feature>
<feature type="transmembrane region" description="Helical" evidence="2">
    <location>
        <begin position="218"/>
        <end position="238"/>
    </location>
</feature>
<feature type="transmembrane region" description="Helical" evidence="2">
    <location>
        <begin position="255"/>
        <end position="275"/>
    </location>
</feature>
<feature type="transmembrane region" description="Helical" evidence="2">
    <location>
        <begin position="315"/>
        <end position="335"/>
    </location>
</feature>
<feature type="transmembrane region" description="Helical" evidence="2">
    <location>
        <begin position="357"/>
        <end position="377"/>
    </location>
</feature>
<feature type="transmembrane region" description="Helical" evidence="2">
    <location>
        <begin position="410"/>
        <end position="430"/>
    </location>
</feature>
<feature type="transmembrane region" description="Helical" evidence="2">
    <location>
        <begin position="443"/>
        <end position="463"/>
    </location>
</feature>
<feature type="transmembrane region" description="Helical" evidence="2">
    <location>
        <begin position="491"/>
        <end position="511"/>
    </location>
</feature>
<feature type="transmembrane region" description="Helical" evidence="2">
    <location>
        <begin position="532"/>
        <end position="552"/>
    </location>
</feature>
<feature type="glycosylation site" description="N-linked (GlcNAc...) asparagine" evidence="2">
    <location>
        <position position="382"/>
    </location>
</feature>
<feature type="glycosylation site" description="N-linked (GlcNAc...) asparagine" evidence="2">
    <location>
        <position position="566"/>
    </location>
</feature>
<keyword id="KW-1003">Cell membrane</keyword>
<keyword id="KW-0325">Glycoprotein</keyword>
<keyword id="KW-0406">Ion transport</keyword>
<keyword id="KW-0472">Membrane</keyword>
<keyword id="KW-1185">Reference proteome</keyword>
<keyword id="KW-0915">Sodium</keyword>
<keyword id="KW-0739">Sodium transport</keyword>
<keyword id="KW-0769">Symport</keyword>
<keyword id="KW-0812">Transmembrane</keyword>
<keyword id="KW-1133">Transmembrane helix</keyword>
<keyword id="KW-0813">Transport</keyword>
<protein>
    <recommendedName>
        <fullName>Na(+)/citrate cotransporter</fullName>
        <shortName evidence="8">NaCT</shortName>
    </recommendedName>
    <alternativeName>
        <fullName>Sodium-coupled citrate transporter</fullName>
    </alternativeName>
    <alternativeName>
        <fullName>Sodium-dependent citrate transporter</fullName>
    </alternativeName>
    <alternativeName>
        <fullName evidence="8">Solute carrier family 13 member 5</fullName>
    </alternativeName>
</protein>
<evidence type="ECO:0000250" key="1">
    <source>
        <dbReference type="UniProtKB" id="Q86YT5"/>
    </source>
</evidence>
<evidence type="ECO:0000255" key="2"/>
<evidence type="ECO:0000269" key="3">
    <source>
    </source>
</evidence>
<evidence type="ECO:0000269" key="4">
    <source>
    </source>
</evidence>
<evidence type="ECO:0000269" key="5">
    <source>
    </source>
</evidence>
<evidence type="ECO:0000269" key="6">
    <source>
    </source>
</evidence>
<evidence type="ECO:0000269" key="7">
    <source>
    </source>
</evidence>
<evidence type="ECO:0000303" key="8">
    <source>
    </source>
</evidence>
<evidence type="ECO:0000305" key="9"/>
<name>S13A5_MOUSE</name>
<dbReference type="EMBL" id="AY368893">
    <property type="protein sequence ID" value="AAR14317.1"/>
    <property type="molecule type" value="mRNA"/>
</dbReference>
<dbReference type="EMBL" id="AK048662">
    <property type="protein sequence ID" value="BAE20664.1"/>
    <property type="molecule type" value="mRNA"/>
</dbReference>
<dbReference type="EMBL" id="AL929071">
    <property type="status" value="NOT_ANNOTATED_CDS"/>
    <property type="molecule type" value="Genomic_DNA"/>
</dbReference>
<dbReference type="CCDS" id="CCDS24983.1"/>
<dbReference type="RefSeq" id="NP_001004148.1">
    <property type="nucleotide sequence ID" value="NM_001004148.5"/>
</dbReference>
<dbReference type="SMR" id="Q67BT3"/>
<dbReference type="FunCoup" id="Q67BT3">
    <property type="interactions" value="304"/>
</dbReference>
<dbReference type="STRING" id="10090.ENSMUSP00000021161"/>
<dbReference type="BindingDB" id="Q67BT3"/>
<dbReference type="ChEMBL" id="CHEMBL3769294"/>
<dbReference type="GlyCosmos" id="Q67BT3">
    <property type="glycosylation" value="2 sites, No reported glycans"/>
</dbReference>
<dbReference type="GlyGen" id="Q67BT3">
    <property type="glycosylation" value="2 sites"/>
</dbReference>
<dbReference type="iPTMnet" id="Q67BT3"/>
<dbReference type="PhosphoSitePlus" id="Q67BT3"/>
<dbReference type="SwissPalm" id="Q67BT3"/>
<dbReference type="PaxDb" id="10090-ENSMUSP00000021161"/>
<dbReference type="ProteomicsDB" id="255442"/>
<dbReference type="Antibodypedia" id="23824">
    <property type="antibodies" value="114 antibodies from 22 providers"/>
</dbReference>
<dbReference type="DNASU" id="237831"/>
<dbReference type="Ensembl" id="ENSMUST00000021161.14">
    <property type="protein sequence ID" value="ENSMUSP00000021161.7"/>
    <property type="gene ID" value="ENSMUSG00000020805.15"/>
</dbReference>
<dbReference type="GeneID" id="237831"/>
<dbReference type="KEGG" id="mmu:237831"/>
<dbReference type="UCSC" id="uc007jym.2">
    <property type="organism name" value="mouse"/>
</dbReference>
<dbReference type="AGR" id="MGI:3037150"/>
<dbReference type="CTD" id="284111"/>
<dbReference type="MGI" id="MGI:3037150">
    <property type="gene designation" value="Slc13a5"/>
</dbReference>
<dbReference type="VEuPathDB" id="HostDB:ENSMUSG00000020805"/>
<dbReference type="eggNOG" id="KOG1281">
    <property type="taxonomic scope" value="Eukaryota"/>
</dbReference>
<dbReference type="GeneTree" id="ENSGT01030000234550"/>
<dbReference type="HOGENOM" id="CLU_005170_9_1_1"/>
<dbReference type="InParanoid" id="Q67BT3"/>
<dbReference type="OMA" id="LMGIWWM"/>
<dbReference type="OrthoDB" id="6493944at2759"/>
<dbReference type="PhylomeDB" id="Q67BT3"/>
<dbReference type="TreeFam" id="TF312913"/>
<dbReference type="Reactome" id="R-MMU-433137">
    <property type="pathway name" value="Sodium-coupled sulphate, di- and tri-carboxylate transporters"/>
</dbReference>
<dbReference type="BioGRID-ORCS" id="237831">
    <property type="hits" value="2 hits in 77 CRISPR screens"/>
</dbReference>
<dbReference type="PRO" id="PR:Q67BT3"/>
<dbReference type="Proteomes" id="UP000000589">
    <property type="component" value="Chromosome 11"/>
</dbReference>
<dbReference type="RNAct" id="Q67BT3">
    <property type="molecule type" value="protein"/>
</dbReference>
<dbReference type="Bgee" id="ENSMUSG00000020805">
    <property type="expression patterns" value="Expressed in vault of skull and 66 other cell types or tissues"/>
</dbReference>
<dbReference type="ExpressionAtlas" id="Q67BT3">
    <property type="expression patterns" value="baseline and differential"/>
</dbReference>
<dbReference type="GO" id="GO:0005829">
    <property type="term" value="C:cytosol"/>
    <property type="evidence" value="ECO:0007669"/>
    <property type="project" value="Ensembl"/>
</dbReference>
<dbReference type="GO" id="GO:0005654">
    <property type="term" value="C:nucleoplasm"/>
    <property type="evidence" value="ECO:0007669"/>
    <property type="project" value="Ensembl"/>
</dbReference>
<dbReference type="GO" id="GO:0005886">
    <property type="term" value="C:plasma membrane"/>
    <property type="evidence" value="ECO:0000250"/>
    <property type="project" value="UniProtKB"/>
</dbReference>
<dbReference type="GO" id="GO:0015137">
    <property type="term" value="F:citrate transmembrane transporter activity"/>
    <property type="evidence" value="ECO:0000314"/>
    <property type="project" value="MGI"/>
</dbReference>
<dbReference type="GO" id="GO:0005343">
    <property type="term" value="F:organic acid:sodium symporter activity"/>
    <property type="evidence" value="ECO:0000314"/>
    <property type="project" value="UniProtKB"/>
</dbReference>
<dbReference type="GO" id="GO:0015141">
    <property type="term" value="F:succinate transmembrane transporter activity"/>
    <property type="evidence" value="ECO:0000314"/>
    <property type="project" value="MGI"/>
</dbReference>
<dbReference type="GO" id="GO:0015142">
    <property type="term" value="F:tricarboxylic acid transmembrane transporter activity"/>
    <property type="evidence" value="ECO:0000314"/>
    <property type="project" value="MGI"/>
</dbReference>
<dbReference type="GO" id="GO:0015742">
    <property type="term" value="P:alpha-ketoglutarate transport"/>
    <property type="evidence" value="ECO:0000314"/>
    <property type="project" value="UniProtKB"/>
</dbReference>
<dbReference type="GO" id="GO:0071285">
    <property type="term" value="P:cellular response to lithium ion"/>
    <property type="evidence" value="ECO:0000314"/>
    <property type="project" value="UniProtKB"/>
</dbReference>
<dbReference type="GO" id="GO:0015746">
    <property type="term" value="P:citrate transport"/>
    <property type="evidence" value="ECO:0000314"/>
    <property type="project" value="UniProtKB"/>
</dbReference>
<dbReference type="GO" id="GO:0015741">
    <property type="term" value="P:fumarate transport"/>
    <property type="evidence" value="ECO:0000314"/>
    <property type="project" value="UniProtKB"/>
</dbReference>
<dbReference type="GO" id="GO:0015729">
    <property type="term" value="P:oxaloacetate transport"/>
    <property type="evidence" value="ECO:0000314"/>
    <property type="project" value="UniProtKB"/>
</dbReference>
<dbReference type="GO" id="GO:0015744">
    <property type="term" value="P:succinate transport"/>
    <property type="evidence" value="ECO:0000314"/>
    <property type="project" value="UniProtKB"/>
</dbReference>
<dbReference type="GO" id="GO:0006842">
    <property type="term" value="P:tricarboxylic acid transport"/>
    <property type="evidence" value="ECO:0000314"/>
    <property type="project" value="MGI"/>
</dbReference>
<dbReference type="CDD" id="cd01115">
    <property type="entry name" value="SLC13_permease"/>
    <property type="match status" value="1"/>
</dbReference>
<dbReference type="InterPro" id="IPR031312">
    <property type="entry name" value="Na/sul_symport_CS"/>
</dbReference>
<dbReference type="InterPro" id="IPR001898">
    <property type="entry name" value="SLC13A/DASS"/>
</dbReference>
<dbReference type="PANTHER" id="PTHR10283:SF109">
    <property type="entry name" value="NA(+)_CITRATE COTRANSPORTER"/>
    <property type="match status" value="1"/>
</dbReference>
<dbReference type="PANTHER" id="PTHR10283">
    <property type="entry name" value="SOLUTE CARRIER FAMILY 13 MEMBER"/>
    <property type="match status" value="1"/>
</dbReference>
<dbReference type="Pfam" id="PF00939">
    <property type="entry name" value="Na_sulph_symp"/>
    <property type="match status" value="1"/>
</dbReference>
<dbReference type="PROSITE" id="PS01271">
    <property type="entry name" value="NA_SULFATE"/>
    <property type="match status" value="1"/>
</dbReference>
<sequence>MDSAKTCVTKFKSFAILLFTPILMLPLVILIPDKFARCAYVIVIMAVYWCTDVIPVAVTSLLPVLLFPLLKVLDSKQVCIQYMKDTNMLFLGSLIVAVAVERWKLHKRVALRMLLFVGTKPSRLMLGFMFVTAFLSMWISNTAATAMMIPIVEAMLQQMIAANTAVEASLGTLELLDKNKTSELPGSQVVFEDPNVQEQEDEETKNMYKAMHLCVCYSASIGGTATLTGTGPNVVLLGQMQELFPDSKDVLNYASWFGFAFPNMVMMLVLAWLWLQCLYMRHNLKKTCICCGEKKRDTEKIAYKVLNEEYQKLGSLSYPECNVLFCFTLLVILWFSRDPGFMPGWLSFAWVEGNTVHITDATVAIFVAILLFIIPSQKPKFNFSSQTEEERKTPFYPPALLDWKVAQEKVPWDIVLLLGGGFAMAKGCETSGLSKWMAAQMEPLRLVKPAVITLILSCLVAMTTECTSNVATTTLFLPIFASMARSIGIHPLYVMIPCTMSASLAFMLPVATPPNAIVFAYGHLRVVDMMKTGLIMNFVGILSVFLSVNTWGRAMFNLDNFPDWANSTSVNT</sequence>
<reference key="1">
    <citation type="submission" date="2003-08" db="EMBL/GenBank/DDBJ databases">
        <title>Functional features and genomic organization of mouse NaCT, a sodium-coupled transporter for citric acid cycle intermediates.</title>
        <authorList>
            <person name="Inoue K."/>
            <person name="Fei Y.-J."/>
            <person name="Zhuang L."/>
            <person name="Gopal E."/>
            <person name="Miyauchi S."/>
            <person name="Ganapathy V."/>
        </authorList>
    </citation>
    <scope>NUCLEOTIDE SEQUENCE [MRNA]</scope>
</reference>
<reference key="2">
    <citation type="journal article" date="2005" name="Science">
        <title>The transcriptional landscape of the mammalian genome.</title>
        <authorList>
            <person name="Carninci P."/>
            <person name="Kasukawa T."/>
            <person name="Katayama S."/>
            <person name="Gough J."/>
            <person name="Frith M.C."/>
            <person name="Maeda N."/>
            <person name="Oyama R."/>
            <person name="Ravasi T."/>
            <person name="Lenhard B."/>
            <person name="Wells C."/>
            <person name="Kodzius R."/>
            <person name="Shimokawa K."/>
            <person name="Bajic V.B."/>
            <person name="Brenner S.E."/>
            <person name="Batalov S."/>
            <person name="Forrest A.R."/>
            <person name="Zavolan M."/>
            <person name="Davis M.J."/>
            <person name="Wilming L.G."/>
            <person name="Aidinis V."/>
            <person name="Allen J.E."/>
            <person name="Ambesi-Impiombato A."/>
            <person name="Apweiler R."/>
            <person name="Aturaliya R.N."/>
            <person name="Bailey T.L."/>
            <person name="Bansal M."/>
            <person name="Baxter L."/>
            <person name="Beisel K.W."/>
            <person name="Bersano T."/>
            <person name="Bono H."/>
            <person name="Chalk A.M."/>
            <person name="Chiu K.P."/>
            <person name="Choudhary V."/>
            <person name="Christoffels A."/>
            <person name="Clutterbuck D.R."/>
            <person name="Crowe M.L."/>
            <person name="Dalla E."/>
            <person name="Dalrymple B.P."/>
            <person name="de Bono B."/>
            <person name="Della Gatta G."/>
            <person name="di Bernardo D."/>
            <person name="Down T."/>
            <person name="Engstrom P."/>
            <person name="Fagiolini M."/>
            <person name="Faulkner G."/>
            <person name="Fletcher C.F."/>
            <person name="Fukushima T."/>
            <person name="Furuno M."/>
            <person name="Futaki S."/>
            <person name="Gariboldi M."/>
            <person name="Georgii-Hemming P."/>
            <person name="Gingeras T.R."/>
            <person name="Gojobori T."/>
            <person name="Green R.E."/>
            <person name="Gustincich S."/>
            <person name="Harbers M."/>
            <person name="Hayashi Y."/>
            <person name="Hensch T.K."/>
            <person name="Hirokawa N."/>
            <person name="Hill D."/>
            <person name="Huminiecki L."/>
            <person name="Iacono M."/>
            <person name="Ikeo K."/>
            <person name="Iwama A."/>
            <person name="Ishikawa T."/>
            <person name="Jakt M."/>
            <person name="Kanapin A."/>
            <person name="Katoh M."/>
            <person name="Kawasawa Y."/>
            <person name="Kelso J."/>
            <person name="Kitamura H."/>
            <person name="Kitano H."/>
            <person name="Kollias G."/>
            <person name="Krishnan S.P."/>
            <person name="Kruger A."/>
            <person name="Kummerfeld S.K."/>
            <person name="Kurochkin I.V."/>
            <person name="Lareau L.F."/>
            <person name="Lazarevic D."/>
            <person name="Lipovich L."/>
            <person name="Liu J."/>
            <person name="Liuni S."/>
            <person name="McWilliam S."/>
            <person name="Madan Babu M."/>
            <person name="Madera M."/>
            <person name="Marchionni L."/>
            <person name="Matsuda H."/>
            <person name="Matsuzawa S."/>
            <person name="Miki H."/>
            <person name="Mignone F."/>
            <person name="Miyake S."/>
            <person name="Morris K."/>
            <person name="Mottagui-Tabar S."/>
            <person name="Mulder N."/>
            <person name="Nakano N."/>
            <person name="Nakauchi H."/>
            <person name="Ng P."/>
            <person name="Nilsson R."/>
            <person name="Nishiguchi S."/>
            <person name="Nishikawa S."/>
            <person name="Nori F."/>
            <person name="Ohara O."/>
            <person name="Okazaki Y."/>
            <person name="Orlando V."/>
            <person name="Pang K.C."/>
            <person name="Pavan W.J."/>
            <person name="Pavesi G."/>
            <person name="Pesole G."/>
            <person name="Petrovsky N."/>
            <person name="Piazza S."/>
            <person name="Reed J."/>
            <person name="Reid J.F."/>
            <person name="Ring B.Z."/>
            <person name="Ringwald M."/>
            <person name="Rost B."/>
            <person name="Ruan Y."/>
            <person name="Salzberg S.L."/>
            <person name="Sandelin A."/>
            <person name="Schneider C."/>
            <person name="Schoenbach C."/>
            <person name="Sekiguchi K."/>
            <person name="Semple C.A."/>
            <person name="Seno S."/>
            <person name="Sessa L."/>
            <person name="Sheng Y."/>
            <person name="Shibata Y."/>
            <person name="Shimada H."/>
            <person name="Shimada K."/>
            <person name="Silva D."/>
            <person name="Sinclair B."/>
            <person name="Sperling S."/>
            <person name="Stupka E."/>
            <person name="Sugiura K."/>
            <person name="Sultana R."/>
            <person name="Takenaka Y."/>
            <person name="Taki K."/>
            <person name="Tammoja K."/>
            <person name="Tan S.L."/>
            <person name="Tang S."/>
            <person name="Taylor M.S."/>
            <person name="Tegner J."/>
            <person name="Teichmann S.A."/>
            <person name="Ueda H.R."/>
            <person name="van Nimwegen E."/>
            <person name="Verardo R."/>
            <person name="Wei C.L."/>
            <person name="Yagi K."/>
            <person name="Yamanishi H."/>
            <person name="Zabarovsky E."/>
            <person name="Zhu S."/>
            <person name="Zimmer A."/>
            <person name="Hide W."/>
            <person name="Bult C."/>
            <person name="Grimmond S.M."/>
            <person name="Teasdale R.D."/>
            <person name="Liu E.T."/>
            <person name="Brusic V."/>
            <person name="Quackenbush J."/>
            <person name="Wahlestedt C."/>
            <person name="Mattick J.S."/>
            <person name="Hume D.A."/>
            <person name="Kai C."/>
            <person name="Sasaki D."/>
            <person name="Tomaru Y."/>
            <person name="Fukuda S."/>
            <person name="Kanamori-Katayama M."/>
            <person name="Suzuki M."/>
            <person name="Aoki J."/>
            <person name="Arakawa T."/>
            <person name="Iida J."/>
            <person name="Imamura K."/>
            <person name="Itoh M."/>
            <person name="Kato T."/>
            <person name="Kawaji H."/>
            <person name="Kawagashira N."/>
            <person name="Kawashima T."/>
            <person name="Kojima M."/>
            <person name="Kondo S."/>
            <person name="Konno H."/>
            <person name="Nakano K."/>
            <person name="Ninomiya N."/>
            <person name="Nishio T."/>
            <person name="Okada M."/>
            <person name="Plessy C."/>
            <person name="Shibata K."/>
            <person name="Shiraki T."/>
            <person name="Suzuki S."/>
            <person name="Tagami M."/>
            <person name="Waki K."/>
            <person name="Watahiki A."/>
            <person name="Okamura-Oho Y."/>
            <person name="Suzuki H."/>
            <person name="Kawai J."/>
            <person name="Hayashizaki Y."/>
        </authorList>
    </citation>
    <scope>NUCLEOTIDE SEQUENCE [LARGE SCALE MRNA]</scope>
    <source>
        <strain>C57BL/6J</strain>
        <tissue>Head</tissue>
    </source>
</reference>
<reference key="3">
    <citation type="journal article" date="2009" name="PLoS Biol.">
        <title>Lineage-specific biology revealed by a finished genome assembly of the mouse.</title>
        <authorList>
            <person name="Church D.M."/>
            <person name="Goodstadt L."/>
            <person name="Hillier L.W."/>
            <person name="Zody M.C."/>
            <person name="Goldstein S."/>
            <person name="She X."/>
            <person name="Bult C.J."/>
            <person name="Agarwala R."/>
            <person name="Cherry J.L."/>
            <person name="DiCuccio M."/>
            <person name="Hlavina W."/>
            <person name="Kapustin Y."/>
            <person name="Meric P."/>
            <person name="Maglott D."/>
            <person name="Birtle Z."/>
            <person name="Marques A.C."/>
            <person name="Graves T."/>
            <person name="Zhou S."/>
            <person name="Teague B."/>
            <person name="Potamousis K."/>
            <person name="Churas C."/>
            <person name="Place M."/>
            <person name="Herschleb J."/>
            <person name="Runnheim R."/>
            <person name="Forrest D."/>
            <person name="Amos-Landgraf J."/>
            <person name="Schwartz D.C."/>
            <person name="Cheng Z."/>
            <person name="Lindblad-Toh K."/>
            <person name="Eichler E.E."/>
            <person name="Ponting C.P."/>
        </authorList>
    </citation>
    <scope>NUCLEOTIDE SEQUENCE [LARGE SCALE GENOMIC DNA]</scope>
    <source>
        <strain>C57BL/6J</strain>
    </source>
</reference>
<reference key="4">
    <citation type="journal article" date="2003" name="Biochem. J.">
        <title>Human sodium-coupled citrate transporter, the orthologue of Drosophila Indy, as a novel target for lithium action.</title>
        <authorList>
            <person name="Inoue K."/>
            <person name="Zhuang L."/>
            <person name="Maddox D.M."/>
            <person name="Smith S.B."/>
            <person name="Ganapathy V."/>
        </authorList>
    </citation>
    <scope>FUNCTION</scope>
    <scope>TRANSPORT ACTIVITY</scope>
    <scope>ACTIVITY REGULATION</scope>
</reference>
<reference key="5">
    <citation type="journal article" date="2004" name="Biochem. J.">
        <title>Functional features and genomic organization of mouse NaCT, a sodium-coupled transporter for tricarboxylic acid cycle intermediates.</title>
        <authorList>
            <person name="Inoue K."/>
            <person name="Fei Y.J."/>
            <person name="Zhuang L."/>
            <person name="Gopal E."/>
            <person name="Miyauchi S."/>
            <person name="Ganapathy V."/>
        </authorList>
    </citation>
    <scope>FUNCTION</scope>
    <scope>TRANSPORT ACTIVITY</scope>
    <scope>BIOPHYSICOCHEMICAL PROPERTIES</scope>
</reference>
<reference key="6">
    <citation type="journal article" date="2015" name="J. Pharmacol. Exp. Ther.">
        <title>Electrophysiological characterization of human and mouse sodium-dependent citrate transporters (NaCT/SLC13A5) reveal species differences with respect to substrate sensitivity and cation dependence.</title>
        <authorList>
            <person name="Zwart R."/>
            <person name="Peeva P.M."/>
            <person name="Rong J.X."/>
            <person name="Sher E."/>
        </authorList>
    </citation>
    <scope>FUNCTION</scope>
    <scope>TRANSPORT ACTIVITY</scope>
</reference>
<reference key="7">
    <citation type="journal article" date="2020" name="Neurobiol. Dis.">
        <title>Disruption of the sodium-dependent citrate transporter SLC13A5 in mice causes alterations in brain citrate levels and neuronal network excitability in the hippocampus.</title>
        <authorList>
            <person name="Henke C."/>
            <person name="Toellner K."/>
            <person name="van Dijk R.M."/>
            <person name="Miljanovic N."/>
            <person name="Cordes T."/>
            <person name="Twele F."/>
            <person name="Broeer S."/>
            <person name="Ziesak V."/>
            <person name="Rohde M."/>
            <person name="Hauck S.M."/>
            <person name="Vogel C."/>
            <person name="Welzel L."/>
            <person name="Schumann T."/>
            <person name="Willmes D.M."/>
            <person name="Kurzbach A."/>
            <person name="El-Agroudy N.N."/>
            <person name="Bornstein S.R."/>
            <person name="Schneider S.A."/>
            <person name="Jordan J."/>
            <person name="Potschka H."/>
            <person name="Metallo C.M."/>
            <person name="Koehling R."/>
            <person name="Birkenfeld A.L."/>
            <person name="Loescher W."/>
        </authorList>
    </citation>
    <scope>FUNCTION</scope>
    <scope>DISRUPTION PHENOTYPE</scope>
</reference>
<reference key="8">
    <citation type="journal article" date="2022" name="Metabolites">
        <title>Untargeted Metabolomics of Slc13a5 Deficiency Reveal Critical Liver-Brain Axis for Lipid Homeostasis.</title>
        <authorList>
            <person name="Milosavljevic S."/>
            <person name="Glinton K.E."/>
            <person name="Li X."/>
            <person name="Medeiros C."/>
            <person name="Gillespie P."/>
            <person name="Seavitt J.R."/>
            <person name="Graham B.H."/>
            <person name="Elsea S.H."/>
        </authorList>
    </citation>
    <scope>FUNCTION</scope>
    <scope>DISRUPTION PHENOTYPE</scope>
</reference>